<protein>
    <recommendedName>
        <fullName evidence="1">Ribonuclease HII</fullName>
        <shortName evidence="1">RNase HII</shortName>
        <ecNumber evidence="1">3.1.26.4</ecNumber>
    </recommendedName>
</protein>
<feature type="chain" id="PRO_0000235728" description="Ribonuclease HII">
    <location>
        <begin position="1"/>
        <end position="207"/>
    </location>
</feature>
<feature type="domain" description="RNase H type-2" evidence="2">
    <location>
        <begin position="12"/>
        <end position="205"/>
    </location>
</feature>
<feature type="binding site" evidence="1">
    <location>
        <position position="18"/>
    </location>
    <ligand>
        <name>a divalent metal cation</name>
        <dbReference type="ChEBI" id="CHEBI:60240"/>
    </ligand>
</feature>
<feature type="binding site" evidence="1">
    <location>
        <position position="19"/>
    </location>
    <ligand>
        <name>a divalent metal cation</name>
        <dbReference type="ChEBI" id="CHEBI:60240"/>
    </ligand>
</feature>
<feature type="binding site" evidence="1">
    <location>
        <position position="114"/>
    </location>
    <ligand>
        <name>a divalent metal cation</name>
        <dbReference type="ChEBI" id="CHEBI:60240"/>
    </ligand>
</feature>
<sequence>MPDYALEAAHGGLVVGIDEVGRGPLAGPVVASAVAFTAPPSETLSSLLDDSKKLTARRRMLAYEALMADEQALIGIGAASVAEIERINIAQACYLAMRRALSRLGCTPDLALVDGKHAPKLPCPIKMVIGGDGISLSIAAASIIAKVTRDRLMVRLAVRHDAYGWERNAGYGTAAHMQGLKLRGVTPHHRRGFAPIRNMIEAEAHAA</sequence>
<organism>
    <name type="scientific">Gluconobacter oxydans (strain 621H)</name>
    <name type="common">Gluconobacter suboxydans</name>
    <dbReference type="NCBI Taxonomy" id="290633"/>
    <lineage>
        <taxon>Bacteria</taxon>
        <taxon>Pseudomonadati</taxon>
        <taxon>Pseudomonadota</taxon>
        <taxon>Alphaproteobacteria</taxon>
        <taxon>Acetobacterales</taxon>
        <taxon>Acetobacteraceae</taxon>
        <taxon>Gluconobacter</taxon>
    </lineage>
</organism>
<accession>Q5FU18</accession>
<evidence type="ECO:0000255" key="1">
    <source>
        <dbReference type="HAMAP-Rule" id="MF_00052"/>
    </source>
</evidence>
<evidence type="ECO:0000255" key="2">
    <source>
        <dbReference type="PROSITE-ProRule" id="PRU01319"/>
    </source>
</evidence>
<keyword id="KW-0963">Cytoplasm</keyword>
<keyword id="KW-0255">Endonuclease</keyword>
<keyword id="KW-0378">Hydrolase</keyword>
<keyword id="KW-0464">Manganese</keyword>
<keyword id="KW-0479">Metal-binding</keyword>
<keyword id="KW-0540">Nuclease</keyword>
<keyword id="KW-1185">Reference proteome</keyword>
<comment type="function">
    <text evidence="1">Endonuclease that specifically degrades the RNA of RNA-DNA hybrids.</text>
</comment>
<comment type="catalytic activity">
    <reaction evidence="1">
        <text>Endonucleolytic cleavage to 5'-phosphomonoester.</text>
        <dbReference type="EC" id="3.1.26.4"/>
    </reaction>
</comment>
<comment type="cofactor">
    <cofactor evidence="1">
        <name>Mn(2+)</name>
        <dbReference type="ChEBI" id="CHEBI:29035"/>
    </cofactor>
    <cofactor evidence="1">
        <name>Mg(2+)</name>
        <dbReference type="ChEBI" id="CHEBI:18420"/>
    </cofactor>
    <text evidence="1">Manganese or magnesium. Binds 1 divalent metal ion per monomer in the absence of substrate. May bind a second metal ion after substrate binding.</text>
</comment>
<comment type="subcellular location">
    <subcellularLocation>
        <location evidence="1">Cytoplasm</location>
    </subcellularLocation>
</comment>
<comment type="similarity">
    <text evidence="1">Belongs to the RNase HII family.</text>
</comment>
<name>RNH2_GLUOX</name>
<dbReference type="EC" id="3.1.26.4" evidence="1"/>
<dbReference type="EMBL" id="CP000009">
    <property type="protein sequence ID" value="AAW60128.1"/>
    <property type="molecule type" value="Genomic_DNA"/>
</dbReference>
<dbReference type="RefSeq" id="WP_011251931.1">
    <property type="nucleotide sequence ID" value="NC_006677.1"/>
</dbReference>
<dbReference type="SMR" id="Q5FU18"/>
<dbReference type="STRING" id="290633.GOX0345"/>
<dbReference type="KEGG" id="gox:GOX0345"/>
<dbReference type="eggNOG" id="COG0164">
    <property type="taxonomic scope" value="Bacteria"/>
</dbReference>
<dbReference type="HOGENOM" id="CLU_036532_3_2_5"/>
<dbReference type="Proteomes" id="UP000006375">
    <property type="component" value="Chromosome"/>
</dbReference>
<dbReference type="GO" id="GO:0005737">
    <property type="term" value="C:cytoplasm"/>
    <property type="evidence" value="ECO:0007669"/>
    <property type="project" value="UniProtKB-SubCell"/>
</dbReference>
<dbReference type="GO" id="GO:0032299">
    <property type="term" value="C:ribonuclease H2 complex"/>
    <property type="evidence" value="ECO:0007669"/>
    <property type="project" value="TreeGrafter"/>
</dbReference>
<dbReference type="GO" id="GO:0030145">
    <property type="term" value="F:manganese ion binding"/>
    <property type="evidence" value="ECO:0007669"/>
    <property type="project" value="UniProtKB-UniRule"/>
</dbReference>
<dbReference type="GO" id="GO:0003723">
    <property type="term" value="F:RNA binding"/>
    <property type="evidence" value="ECO:0007669"/>
    <property type="project" value="InterPro"/>
</dbReference>
<dbReference type="GO" id="GO:0004523">
    <property type="term" value="F:RNA-DNA hybrid ribonuclease activity"/>
    <property type="evidence" value="ECO:0007669"/>
    <property type="project" value="UniProtKB-UniRule"/>
</dbReference>
<dbReference type="GO" id="GO:0043137">
    <property type="term" value="P:DNA replication, removal of RNA primer"/>
    <property type="evidence" value="ECO:0007669"/>
    <property type="project" value="TreeGrafter"/>
</dbReference>
<dbReference type="GO" id="GO:0006298">
    <property type="term" value="P:mismatch repair"/>
    <property type="evidence" value="ECO:0007669"/>
    <property type="project" value="TreeGrafter"/>
</dbReference>
<dbReference type="CDD" id="cd07182">
    <property type="entry name" value="RNase_HII_bacteria_HII_like"/>
    <property type="match status" value="1"/>
</dbReference>
<dbReference type="Gene3D" id="3.30.420.10">
    <property type="entry name" value="Ribonuclease H-like superfamily/Ribonuclease H"/>
    <property type="match status" value="1"/>
</dbReference>
<dbReference type="HAMAP" id="MF_00052_B">
    <property type="entry name" value="RNase_HII_B"/>
    <property type="match status" value="1"/>
</dbReference>
<dbReference type="InterPro" id="IPR022898">
    <property type="entry name" value="RNase_HII"/>
</dbReference>
<dbReference type="InterPro" id="IPR001352">
    <property type="entry name" value="RNase_HII/HIII"/>
</dbReference>
<dbReference type="InterPro" id="IPR024567">
    <property type="entry name" value="RNase_HII/HIII_dom"/>
</dbReference>
<dbReference type="InterPro" id="IPR012337">
    <property type="entry name" value="RNaseH-like_sf"/>
</dbReference>
<dbReference type="InterPro" id="IPR036397">
    <property type="entry name" value="RNaseH_sf"/>
</dbReference>
<dbReference type="NCBIfam" id="NF000595">
    <property type="entry name" value="PRK00015.1-3"/>
    <property type="match status" value="1"/>
</dbReference>
<dbReference type="PANTHER" id="PTHR10954">
    <property type="entry name" value="RIBONUCLEASE H2 SUBUNIT A"/>
    <property type="match status" value="1"/>
</dbReference>
<dbReference type="PANTHER" id="PTHR10954:SF18">
    <property type="entry name" value="RIBONUCLEASE HII"/>
    <property type="match status" value="1"/>
</dbReference>
<dbReference type="Pfam" id="PF01351">
    <property type="entry name" value="RNase_HII"/>
    <property type="match status" value="1"/>
</dbReference>
<dbReference type="SUPFAM" id="SSF53098">
    <property type="entry name" value="Ribonuclease H-like"/>
    <property type="match status" value="1"/>
</dbReference>
<dbReference type="PROSITE" id="PS51975">
    <property type="entry name" value="RNASE_H_2"/>
    <property type="match status" value="1"/>
</dbReference>
<reference key="1">
    <citation type="journal article" date="2005" name="Nat. Biotechnol.">
        <title>Complete genome sequence of the acetic acid bacterium Gluconobacter oxydans.</title>
        <authorList>
            <person name="Prust C."/>
            <person name="Hoffmeister M."/>
            <person name="Liesegang H."/>
            <person name="Wiezer A."/>
            <person name="Fricke W.F."/>
            <person name="Ehrenreich A."/>
            <person name="Gottschalk G."/>
            <person name="Deppenmeier U."/>
        </authorList>
    </citation>
    <scope>NUCLEOTIDE SEQUENCE [LARGE SCALE GENOMIC DNA]</scope>
    <source>
        <strain>621H</strain>
    </source>
</reference>
<gene>
    <name evidence="1" type="primary">rnhB</name>
    <name type="ordered locus">GOX0345</name>
</gene>
<proteinExistence type="inferred from homology"/>